<protein>
    <recommendedName>
        <fullName evidence="1">Argininosuccinate lyase</fullName>
        <shortName evidence="1">ASAL</shortName>
        <ecNumber evidence="1">4.3.2.1</ecNumber>
    </recommendedName>
    <alternativeName>
        <fullName evidence="1">Arginosuccinase</fullName>
    </alternativeName>
</protein>
<accession>Q2P2F7</accession>
<organism>
    <name type="scientific">Xanthomonas oryzae pv. oryzae (strain MAFF 311018)</name>
    <dbReference type="NCBI Taxonomy" id="342109"/>
    <lineage>
        <taxon>Bacteria</taxon>
        <taxon>Pseudomonadati</taxon>
        <taxon>Pseudomonadota</taxon>
        <taxon>Gammaproteobacteria</taxon>
        <taxon>Lysobacterales</taxon>
        <taxon>Lysobacteraceae</taxon>
        <taxon>Xanthomonas</taxon>
    </lineage>
</organism>
<comment type="catalytic activity">
    <reaction evidence="1">
        <text>2-(N(omega)-L-arginino)succinate = fumarate + L-arginine</text>
        <dbReference type="Rhea" id="RHEA:24020"/>
        <dbReference type="ChEBI" id="CHEBI:29806"/>
        <dbReference type="ChEBI" id="CHEBI:32682"/>
        <dbReference type="ChEBI" id="CHEBI:57472"/>
        <dbReference type="EC" id="4.3.2.1"/>
    </reaction>
</comment>
<comment type="pathway">
    <text evidence="1">Amino-acid biosynthesis; L-arginine biosynthesis; L-arginine from L-ornithine and carbamoyl phosphate: step 3/3.</text>
</comment>
<comment type="subcellular location">
    <subcellularLocation>
        <location evidence="1">Cytoplasm</location>
    </subcellularLocation>
</comment>
<comment type="similarity">
    <text evidence="1">Belongs to the lyase 1 family. Argininosuccinate lyase subfamily.</text>
</comment>
<evidence type="ECO:0000255" key="1">
    <source>
        <dbReference type="HAMAP-Rule" id="MF_00006"/>
    </source>
</evidence>
<feature type="chain" id="PRO_1000089130" description="Argininosuccinate lyase">
    <location>
        <begin position="1"/>
        <end position="431"/>
    </location>
</feature>
<gene>
    <name evidence="1" type="primary">argH</name>
    <name type="ordered locus">XOO2515</name>
</gene>
<keyword id="KW-0028">Amino-acid biosynthesis</keyword>
<keyword id="KW-0055">Arginine biosynthesis</keyword>
<keyword id="KW-0963">Cytoplasm</keyword>
<keyword id="KW-0456">Lyase</keyword>
<name>ARLY_XANOM</name>
<reference key="1">
    <citation type="journal article" date="2005" name="Jpn. Agric. Res. Q.">
        <title>Genome sequence of Xanthomonas oryzae pv. oryzae suggests contribution of large numbers of effector genes and insertion sequences to its race diversity.</title>
        <authorList>
            <person name="Ochiai H."/>
            <person name="Inoue Y."/>
            <person name="Takeya M."/>
            <person name="Sasaki A."/>
            <person name="Kaku H."/>
        </authorList>
    </citation>
    <scope>NUCLEOTIDE SEQUENCE [LARGE SCALE GENOMIC DNA]</scope>
    <source>
        <strain>MAFF 311018</strain>
    </source>
</reference>
<proteinExistence type="inferred from homology"/>
<dbReference type="EC" id="4.3.2.1" evidence="1"/>
<dbReference type="EMBL" id="AP008229">
    <property type="protein sequence ID" value="BAE69270.1"/>
    <property type="molecule type" value="Genomic_DNA"/>
</dbReference>
<dbReference type="RefSeq" id="WP_011408717.1">
    <property type="nucleotide sequence ID" value="NC_007705.1"/>
</dbReference>
<dbReference type="SMR" id="Q2P2F7"/>
<dbReference type="KEGG" id="xom:XOO2515"/>
<dbReference type="HOGENOM" id="CLU_027272_2_0_6"/>
<dbReference type="UniPathway" id="UPA00068">
    <property type="reaction ID" value="UER00114"/>
</dbReference>
<dbReference type="GO" id="GO:0005829">
    <property type="term" value="C:cytosol"/>
    <property type="evidence" value="ECO:0007669"/>
    <property type="project" value="TreeGrafter"/>
</dbReference>
<dbReference type="GO" id="GO:0004056">
    <property type="term" value="F:argininosuccinate lyase activity"/>
    <property type="evidence" value="ECO:0007669"/>
    <property type="project" value="UniProtKB-UniRule"/>
</dbReference>
<dbReference type="GO" id="GO:0042450">
    <property type="term" value="P:arginine biosynthetic process via ornithine"/>
    <property type="evidence" value="ECO:0007669"/>
    <property type="project" value="InterPro"/>
</dbReference>
<dbReference type="GO" id="GO:0006526">
    <property type="term" value="P:L-arginine biosynthetic process"/>
    <property type="evidence" value="ECO:0007669"/>
    <property type="project" value="UniProtKB-UniRule"/>
</dbReference>
<dbReference type="CDD" id="cd01359">
    <property type="entry name" value="Argininosuccinate_lyase"/>
    <property type="match status" value="1"/>
</dbReference>
<dbReference type="Gene3D" id="1.10.40.30">
    <property type="entry name" value="Fumarase/aspartase (C-terminal domain)"/>
    <property type="match status" value="1"/>
</dbReference>
<dbReference type="Gene3D" id="1.20.200.10">
    <property type="entry name" value="Fumarase/aspartase (Central domain)"/>
    <property type="match status" value="1"/>
</dbReference>
<dbReference type="Gene3D" id="1.10.275.10">
    <property type="entry name" value="Fumarase/aspartase (N-terminal domain)"/>
    <property type="match status" value="1"/>
</dbReference>
<dbReference type="HAMAP" id="MF_00006">
    <property type="entry name" value="Arg_succ_lyase"/>
    <property type="match status" value="1"/>
</dbReference>
<dbReference type="InterPro" id="IPR009049">
    <property type="entry name" value="Argininosuccinate_lyase"/>
</dbReference>
<dbReference type="InterPro" id="IPR024083">
    <property type="entry name" value="Fumarase/histidase_N"/>
</dbReference>
<dbReference type="InterPro" id="IPR020557">
    <property type="entry name" value="Fumarate_lyase_CS"/>
</dbReference>
<dbReference type="InterPro" id="IPR000362">
    <property type="entry name" value="Fumarate_lyase_fam"/>
</dbReference>
<dbReference type="InterPro" id="IPR022761">
    <property type="entry name" value="Fumarate_lyase_N"/>
</dbReference>
<dbReference type="InterPro" id="IPR008948">
    <property type="entry name" value="L-Aspartase-like"/>
</dbReference>
<dbReference type="PANTHER" id="PTHR43814">
    <property type="entry name" value="ARGININOSUCCINATE LYASE"/>
    <property type="match status" value="1"/>
</dbReference>
<dbReference type="PANTHER" id="PTHR43814:SF1">
    <property type="entry name" value="ARGININOSUCCINATE LYASE"/>
    <property type="match status" value="1"/>
</dbReference>
<dbReference type="Pfam" id="PF00206">
    <property type="entry name" value="Lyase_1"/>
    <property type="match status" value="1"/>
</dbReference>
<dbReference type="PRINTS" id="PR00145">
    <property type="entry name" value="ARGSUCLYASE"/>
</dbReference>
<dbReference type="PRINTS" id="PR00149">
    <property type="entry name" value="FUMRATELYASE"/>
</dbReference>
<dbReference type="SUPFAM" id="SSF48557">
    <property type="entry name" value="L-aspartase-like"/>
    <property type="match status" value="1"/>
</dbReference>
<dbReference type="PROSITE" id="PS00163">
    <property type="entry name" value="FUMARATE_LYASES"/>
    <property type="match status" value="1"/>
</dbReference>
<sequence>MTNLLWQKPGVAVDAKIQSFLAGDDVILDREFFLHDIAASKAHAQGLQHIGILSPQELDGLSEQLDLLAEDFRGGAFVLDEQYEDCHSAIEARLTERLGDAGRKIHTGRSRNDQILVATRLWLKDKLQRVATLSAEIAKVALDRAQAEAELPVPGYTHIQRAVVSSAGMWWAGWAEAFIDNAVRATDTLQLVDSNPLGTAAGYGVNLPLDRAHTTAELGFARLQVSPIYAQLSRGKYELAALEALGSATLDLRRIAWDVSLFTSGEFAFVALPAQYTTGSSIMPNKRNPDVIELMRATHASVAAARTEIEQLLSLPSGYHRDLQSSKGAIVHGFGRGLAALELLPALLANLEWRPDKLRAAIDSGMYATDVAVEAAVAGVPFREAYKAAAEASDTAGQGRTPEGSLAARVSPGAAADLQLDVLLARWETLR</sequence>